<reference key="1">
    <citation type="journal article" date="2000" name="Science">
        <title>The genome sequence of Drosophila melanogaster.</title>
        <authorList>
            <person name="Adams M.D."/>
            <person name="Celniker S.E."/>
            <person name="Holt R.A."/>
            <person name="Evans C.A."/>
            <person name="Gocayne J.D."/>
            <person name="Amanatides P.G."/>
            <person name="Scherer S.E."/>
            <person name="Li P.W."/>
            <person name="Hoskins R.A."/>
            <person name="Galle R.F."/>
            <person name="George R.A."/>
            <person name="Lewis S.E."/>
            <person name="Richards S."/>
            <person name="Ashburner M."/>
            <person name="Henderson S.N."/>
            <person name="Sutton G.G."/>
            <person name="Wortman J.R."/>
            <person name="Yandell M.D."/>
            <person name="Zhang Q."/>
            <person name="Chen L.X."/>
            <person name="Brandon R.C."/>
            <person name="Rogers Y.-H.C."/>
            <person name="Blazej R.G."/>
            <person name="Champe M."/>
            <person name="Pfeiffer B.D."/>
            <person name="Wan K.H."/>
            <person name="Doyle C."/>
            <person name="Baxter E.G."/>
            <person name="Helt G."/>
            <person name="Nelson C.R."/>
            <person name="Miklos G.L.G."/>
            <person name="Abril J.F."/>
            <person name="Agbayani A."/>
            <person name="An H.-J."/>
            <person name="Andrews-Pfannkoch C."/>
            <person name="Baldwin D."/>
            <person name="Ballew R.M."/>
            <person name="Basu A."/>
            <person name="Baxendale J."/>
            <person name="Bayraktaroglu L."/>
            <person name="Beasley E.M."/>
            <person name="Beeson K.Y."/>
            <person name="Benos P.V."/>
            <person name="Berman B.P."/>
            <person name="Bhandari D."/>
            <person name="Bolshakov S."/>
            <person name="Borkova D."/>
            <person name="Botchan M.R."/>
            <person name="Bouck J."/>
            <person name="Brokstein P."/>
            <person name="Brottier P."/>
            <person name="Burtis K.C."/>
            <person name="Busam D.A."/>
            <person name="Butler H."/>
            <person name="Cadieu E."/>
            <person name="Center A."/>
            <person name="Chandra I."/>
            <person name="Cherry J.M."/>
            <person name="Cawley S."/>
            <person name="Dahlke C."/>
            <person name="Davenport L.B."/>
            <person name="Davies P."/>
            <person name="de Pablos B."/>
            <person name="Delcher A."/>
            <person name="Deng Z."/>
            <person name="Mays A.D."/>
            <person name="Dew I."/>
            <person name="Dietz S.M."/>
            <person name="Dodson K."/>
            <person name="Doup L.E."/>
            <person name="Downes M."/>
            <person name="Dugan-Rocha S."/>
            <person name="Dunkov B.C."/>
            <person name="Dunn P."/>
            <person name="Durbin K.J."/>
            <person name="Evangelista C.C."/>
            <person name="Ferraz C."/>
            <person name="Ferriera S."/>
            <person name="Fleischmann W."/>
            <person name="Fosler C."/>
            <person name="Gabrielian A.E."/>
            <person name="Garg N.S."/>
            <person name="Gelbart W.M."/>
            <person name="Glasser K."/>
            <person name="Glodek A."/>
            <person name="Gong F."/>
            <person name="Gorrell J.H."/>
            <person name="Gu Z."/>
            <person name="Guan P."/>
            <person name="Harris M."/>
            <person name="Harris N.L."/>
            <person name="Harvey D.A."/>
            <person name="Heiman T.J."/>
            <person name="Hernandez J.R."/>
            <person name="Houck J."/>
            <person name="Hostin D."/>
            <person name="Houston K.A."/>
            <person name="Howland T.J."/>
            <person name="Wei M.-H."/>
            <person name="Ibegwam C."/>
            <person name="Jalali M."/>
            <person name="Kalush F."/>
            <person name="Karpen G.H."/>
            <person name="Ke Z."/>
            <person name="Kennison J.A."/>
            <person name="Ketchum K.A."/>
            <person name="Kimmel B.E."/>
            <person name="Kodira C.D."/>
            <person name="Kraft C.L."/>
            <person name="Kravitz S."/>
            <person name="Kulp D."/>
            <person name="Lai Z."/>
            <person name="Lasko P."/>
            <person name="Lei Y."/>
            <person name="Levitsky A.A."/>
            <person name="Li J.H."/>
            <person name="Li Z."/>
            <person name="Liang Y."/>
            <person name="Lin X."/>
            <person name="Liu X."/>
            <person name="Mattei B."/>
            <person name="McIntosh T.C."/>
            <person name="McLeod M.P."/>
            <person name="McPherson D."/>
            <person name="Merkulov G."/>
            <person name="Milshina N.V."/>
            <person name="Mobarry C."/>
            <person name="Morris J."/>
            <person name="Moshrefi A."/>
            <person name="Mount S.M."/>
            <person name="Moy M."/>
            <person name="Murphy B."/>
            <person name="Murphy L."/>
            <person name="Muzny D.M."/>
            <person name="Nelson D.L."/>
            <person name="Nelson D.R."/>
            <person name="Nelson K.A."/>
            <person name="Nixon K."/>
            <person name="Nusskern D.R."/>
            <person name="Pacleb J.M."/>
            <person name="Palazzolo M."/>
            <person name="Pittman G.S."/>
            <person name="Pan S."/>
            <person name="Pollard J."/>
            <person name="Puri V."/>
            <person name="Reese M.G."/>
            <person name="Reinert K."/>
            <person name="Remington K."/>
            <person name="Saunders R.D.C."/>
            <person name="Scheeler F."/>
            <person name="Shen H."/>
            <person name="Shue B.C."/>
            <person name="Siden-Kiamos I."/>
            <person name="Simpson M."/>
            <person name="Skupski M.P."/>
            <person name="Smith T.J."/>
            <person name="Spier E."/>
            <person name="Spradling A.C."/>
            <person name="Stapleton M."/>
            <person name="Strong R."/>
            <person name="Sun E."/>
            <person name="Svirskas R."/>
            <person name="Tector C."/>
            <person name="Turner R."/>
            <person name="Venter E."/>
            <person name="Wang A.H."/>
            <person name="Wang X."/>
            <person name="Wang Z.-Y."/>
            <person name="Wassarman D.A."/>
            <person name="Weinstock G.M."/>
            <person name="Weissenbach J."/>
            <person name="Williams S.M."/>
            <person name="Woodage T."/>
            <person name="Worley K.C."/>
            <person name="Wu D."/>
            <person name="Yang S."/>
            <person name="Yao Q.A."/>
            <person name="Ye J."/>
            <person name="Yeh R.-F."/>
            <person name="Zaveri J.S."/>
            <person name="Zhan M."/>
            <person name="Zhang G."/>
            <person name="Zhao Q."/>
            <person name="Zheng L."/>
            <person name="Zheng X.H."/>
            <person name="Zhong F.N."/>
            <person name="Zhong W."/>
            <person name="Zhou X."/>
            <person name="Zhu S.C."/>
            <person name="Zhu X."/>
            <person name="Smith H.O."/>
            <person name="Gibbs R.A."/>
            <person name="Myers E.W."/>
            <person name="Rubin G.M."/>
            <person name="Venter J.C."/>
        </authorList>
    </citation>
    <scope>NUCLEOTIDE SEQUENCE [LARGE SCALE GENOMIC DNA]</scope>
    <source>
        <strain>Berkeley</strain>
    </source>
</reference>
<reference key="2">
    <citation type="journal article" date="2002" name="Genome Biol.">
        <title>Annotation of the Drosophila melanogaster euchromatic genome: a systematic review.</title>
        <authorList>
            <person name="Misra S."/>
            <person name="Crosby M.A."/>
            <person name="Mungall C.J."/>
            <person name="Matthews B.B."/>
            <person name="Campbell K.S."/>
            <person name="Hradecky P."/>
            <person name="Huang Y."/>
            <person name="Kaminker J.S."/>
            <person name="Millburn G.H."/>
            <person name="Prochnik S.E."/>
            <person name="Smith C.D."/>
            <person name="Tupy J.L."/>
            <person name="Whitfield E.J."/>
            <person name="Bayraktaroglu L."/>
            <person name="Berman B.P."/>
            <person name="Bettencourt B.R."/>
            <person name="Celniker S.E."/>
            <person name="de Grey A.D.N.J."/>
            <person name="Drysdale R.A."/>
            <person name="Harris N.L."/>
            <person name="Richter J."/>
            <person name="Russo S."/>
            <person name="Schroeder A.J."/>
            <person name="Shu S.Q."/>
            <person name="Stapleton M."/>
            <person name="Yamada C."/>
            <person name="Ashburner M."/>
            <person name="Gelbart W.M."/>
            <person name="Rubin G.M."/>
            <person name="Lewis S.E."/>
        </authorList>
    </citation>
    <scope>GENOME REANNOTATION</scope>
    <source>
        <strain>Berkeley</strain>
    </source>
</reference>
<reference key="3">
    <citation type="journal article" date="2002" name="Genome Biol.">
        <title>A Drosophila full-length cDNA resource.</title>
        <authorList>
            <person name="Stapleton M."/>
            <person name="Carlson J.W."/>
            <person name="Brokstein P."/>
            <person name="Yu C."/>
            <person name="Champe M."/>
            <person name="George R.A."/>
            <person name="Guarin H."/>
            <person name="Kronmiller B."/>
            <person name="Pacleb J.M."/>
            <person name="Park S."/>
            <person name="Wan K.H."/>
            <person name="Rubin G.M."/>
            <person name="Celniker S.E."/>
        </authorList>
    </citation>
    <scope>NUCLEOTIDE SEQUENCE [LARGE SCALE MRNA]</scope>
    <source>
        <strain>Berkeley</strain>
        <tissue>Ovary</tissue>
    </source>
</reference>
<reference key="4">
    <citation type="journal article" date="2012" name="PLoS ONE">
        <title>Expression of yeast NDI1 rescues a Drosophila complex I assembly defect.</title>
        <authorList>
            <person name="Cho J."/>
            <person name="Hur J.H."/>
            <person name="Graniel J."/>
            <person name="Benzer S."/>
            <person name="Walker D.W."/>
        </authorList>
    </citation>
    <scope>FUNCTION</scope>
    <scope>DISRUPTION PHENOTYPE</scope>
</reference>
<reference key="5">
    <citation type="journal article" date="2021" name="IScience">
        <title>Dissecting the concordant and disparate roles of NDUFAF3 and NDUFAF4 in mitochondrial complex I biogenesis.</title>
        <authorList>
            <person name="Murari A."/>
            <person name="Rhooms S.K."/>
            <person name="Garcia C."/>
            <person name="Liu T."/>
            <person name="Li H."/>
            <person name="Mishra B."/>
            <person name="Deshong C."/>
            <person name="Owusu-Ansah E."/>
        </authorList>
    </citation>
    <scope>INTERACTION WITH COMPLEX 1</scope>
</reference>
<gene>
    <name evidence="6" type="primary">NdufAF1</name>
    <name evidence="6" type="synonym">CIA30</name>
    <name evidence="6" type="ORF">CG7598</name>
</gene>
<protein>
    <recommendedName>
        <fullName evidence="5">Complex I intermediate-associated protein 30, mitochondrial</fullName>
    </recommendedName>
    <alternativeName>
        <fullName evidence="6">NADH:ubiquinone oxidoreductase complex assembly factor 1</fullName>
    </alternativeName>
</protein>
<organism evidence="7">
    <name type="scientific">Drosophila melanogaster</name>
    <name type="common">Fruit fly</name>
    <dbReference type="NCBI Taxonomy" id="7227"/>
    <lineage>
        <taxon>Eukaryota</taxon>
        <taxon>Metazoa</taxon>
        <taxon>Ecdysozoa</taxon>
        <taxon>Arthropoda</taxon>
        <taxon>Hexapoda</taxon>
        <taxon>Insecta</taxon>
        <taxon>Pterygota</taxon>
        <taxon>Neoptera</taxon>
        <taxon>Endopterygota</taxon>
        <taxon>Diptera</taxon>
        <taxon>Brachycera</taxon>
        <taxon>Muscomorpha</taxon>
        <taxon>Ephydroidea</taxon>
        <taxon>Drosophilidae</taxon>
        <taxon>Drosophila</taxon>
        <taxon>Sophophora</taxon>
    </lineage>
</organism>
<accession>Q9VAI1</accession>
<accession>Q8T3R5</accession>
<proteinExistence type="evidence at protein level"/>
<feature type="transit peptide" description="Mitochondrion" evidence="2">
    <location>
        <begin position="1"/>
        <end position="29"/>
    </location>
</feature>
<feature type="chain" id="PRO_0000005467" description="Complex I intermediate-associated protein 30, mitochondrial">
    <location>
        <begin position="30"/>
        <end position="296"/>
    </location>
</feature>
<feature type="sequence conflict" description="In Ref. 3; AAM10989." evidence="5" ref="3">
    <original>R</original>
    <variation>K</variation>
    <location>
        <position position="58"/>
    </location>
</feature>
<feature type="sequence conflict" description="In Ref. 3; AAM10989." evidence="5" ref="3">
    <original>V</original>
    <variation>I</variation>
    <location>
        <position position="176"/>
    </location>
</feature>
<comment type="function">
    <text evidence="3">Chaperone protein involved in the assembly of the mitochondrial NADH:ubiquinone oxidoreductase complex (complex I).</text>
</comment>
<comment type="subunit">
    <text evidence="4">Associates with mitochondrial complex I assembly intermediates during its biogenesis.</text>
</comment>
<comment type="subcellular location">
    <subcellularLocation>
        <location evidence="1">Mitochondrion</location>
    </subcellularLocation>
</comment>
<comment type="disruption phenotype">
    <text evidence="3">Larvae are viable but most do not survive the late pupa/early adult stages. Surviving adults that are assisted to eclose display severe degeneration of myofibrils and mitochondria.</text>
</comment>
<comment type="similarity">
    <text evidence="5">Belongs to the CIA30 family.</text>
</comment>
<evidence type="ECO:0000250" key="1">
    <source>
        <dbReference type="UniProtKB" id="Q9Y375"/>
    </source>
</evidence>
<evidence type="ECO:0000255" key="2"/>
<evidence type="ECO:0000269" key="3">
    <source>
    </source>
</evidence>
<evidence type="ECO:0000269" key="4">
    <source>
    </source>
</evidence>
<evidence type="ECO:0000305" key="5"/>
<evidence type="ECO:0000312" key="6">
    <source>
        <dbReference type="FlyBase" id="FBgn0039689"/>
    </source>
</evidence>
<evidence type="ECO:0000312" key="7">
    <source>
        <dbReference type="Proteomes" id="UP000000803"/>
    </source>
</evidence>
<dbReference type="EMBL" id="AE014297">
    <property type="protein sequence ID" value="AAF56928.1"/>
    <property type="molecule type" value="Genomic_DNA"/>
</dbReference>
<dbReference type="EMBL" id="AY060912">
    <property type="protein sequence ID" value="AAL28460.1"/>
    <property type="molecule type" value="mRNA"/>
</dbReference>
<dbReference type="EMBL" id="AY094636">
    <property type="protein sequence ID" value="AAM10989.1"/>
    <property type="molecule type" value="mRNA"/>
</dbReference>
<dbReference type="RefSeq" id="NP_651718.1">
    <property type="nucleotide sequence ID" value="NM_143461.4"/>
</dbReference>
<dbReference type="SMR" id="Q9VAI1"/>
<dbReference type="BioGRID" id="68367">
    <property type="interactions" value="1"/>
</dbReference>
<dbReference type="FunCoup" id="Q9VAI1">
    <property type="interactions" value="189"/>
</dbReference>
<dbReference type="IntAct" id="Q9VAI1">
    <property type="interactions" value="1"/>
</dbReference>
<dbReference type="STRING" id="7227.FBpp0084839"/>
<dbReference type="PaxDb" id="7227-FBpp0084839"/>
<dbReference type="DNASU" id="43503"/>
<dbReference type="EnsemblMetazoa" id="FBtr0085473">
    <property type="protein sequence ID" value="FBpp0084839"/>
    <property type="gene ID" value="FBgn0039689"/>
</dbReference>
<dbReference type="GeneID" id="43503"/>
<dbReference type="KEGG" id="dme:Dmel_CG7598"/>
<dbReference type="UCSC" id="CG7598-RA">
    <property type="organism name" value="d. melanogaster"/>
</dbReference>
<dbReference type="AGR" id="FB:FBgn0039689"/>
<dbReference type="CTD" id="100034914"/>
<dbReference type="FlyBase" id="FBgn0039689">
    <property type="gene designation" value="NdufAF1"/>
</dbReference>
<dbReference type="VEuPathDB" id="VectorBase:FBgn0039689"/>
<dbReference type="eggNOG" id="KOG2435">
    <property type="taxonomic scope" value="Eukaryota"/>
</dbReference>
<dbReference type="GeneTree" id="ENSGT00390000007200"/>
<dbReference type="HOGENOM" id="CLU_059028_2_2_1"/>
<dbReference type="InParanoid" id="Q9VAI1"/>
<dbReference type="OMA" id="KRTGYAN"/>
<dbReference type="OrthoDB" id="42561at2759"/>
<dbReference type="PhylomeDB" id="Q9VAI1"/>
<dbReference type="Reactome" id="R-DME-6799198">
    <property type="pathway name" value="Complex I biogenesis"/>
</dbReference>
<dbReference type="BioGRID-ORCS" id="43503">
    <property type="hits" value="0 hits in 1 CRISPR screen"/>
</dbReference>
<dbReference type="GenomeRNAi" id="43503"/>
<dbReference type="PRO" id="PR:Q9VAI1"/>
<dbReference type="Proteomes" id="UP000000803">
    <property type="component" value="Chromosome 3R"/>
</dbReference>
<dbReference type="Bgee" id="FBgn0039689">
    <property type="expression patterns" value="Expressed in adult class III enteroendocrine cell in adult midgut (Drosophila) and 71 other cell types or tissues"/>
</dbReference>
<dbReference type="ExpressionAtlas" id="Q9VAI1">
    <property type="expression patterns" value="baseline and differential"/>
</dbReference>
<dbReference type="GO" id="GO:0005739">
    <property type="term" value="C:mitochondrion"/>
    <property type="evidence" value="ECO:0000314"/>
    <property type="project" value="FlyBase"/>
</dbReference>
<dbReference type="GO" id="GO:1990204">
    <property type="term" value="C:oxidoreductase complex"/>
    <property type="evidence" value="ECO:0000250"/>
    <property type="project" value="UniProtKB"/>
</dbReference>
<dbReference type="GO" id="GO:0051082">
    <property type="term" value="F:unfolded protein binding"/>
    <property type="evidence" value="ECO:0000250"/>
    <property type="project" value="UniProtKB"/>
</dbReference>
<dbReference type="GO" id="GO:0006120">
    <property type="term" value="P:mitochondrial electron transport, NADH to ubiquinone"/>
    <property type="evidence" value="ECO:0000315"/>
    <property type="project" value="FlyBase"/>
</dbReference>
<dbReference type="GO" id="GO:0032981">
    <property type="term" value="P:mitochondrial respiratory chain complex I assembly"/>
    <property type="evidence" value="ECO:0000315"/>
    <property type="project" value="FlyBase"/>
</dbReference>
<dbReference type="GO" id="GO:0009408">
    <property type="term" value="P:response to heat"/>
    <property type="evidence" value="ECO:0000315"/>
    <property type="project" value="FlyBase"/>
</dbReference>
<dbReference type="GO" id="GO:0055093">
    <property type="term" value="P:response to hyperoxia"/>
    <property type="evidence" value="ECO:0000315"/>
    <property type="project" value="FlyBase"/>
</dbReference>
<dbReference type="GO" id="GO:0001666">
    <property type="term" value="P:response to hypoxia"/>
    <property type="evidence" value="ECO:0000315"/>
    <property type="project" value="FlyBase"/>
</dbReference>
<dbReference type="GO" id="GO:0042594">
    <property type="term" value="P:response to starvation"/>
    <property type="evidence" value="ECO:0000315"/>
    <property type="project" value="FlyBase"/>
</dbReference>
<dbReference type="InterPro" id="IPR008979">
    <property type="entry name" value="Galactose-bd-like_sf"/>
</dbReference>
<dbReference type="InterPro" id="IPR013857">
    <property type="entry name" value="NADH-UbQ_OxRdtase-assoc_prot30"/>
</dbReference>
<dbReference type="InterPro" id="IPR039131">
    <property type="entry name" value="NDUFAF1"/>
</dbReference>
<dbReference type="PANTHER" id="PTHR13194">
    <property type="entry name" value="COMPLEX I INTERMEDIATE-ASSOCIATED PROTEIN 30"/>
    <property type="match status" value="1"/>
</dbReference>
<dbReference type="PANTHER" id="PTHR13194:SF18">
    <property type="entry name" value="COMPLEX I INTERMEDIATE-ASSOCIATED PROTEIN 30, MITOCHONDRIAL"/>
    <property type="match status" value="1"/>
</dbReference>
<dbReference type="Pfam" id="PF08547">
    <property type="entry name" value="CIA30"/>
    <property type="match status" value="1"/>
</dbReference>
<dbReference type="SUPFAM" id="SSF49785">
    <property type="entry name" value="Galactose-binding domain-like"/>
    <property type="match status" value="1"/>
</dbReference>
<sequence length="296" mass="34206">MNSLLRQGLRLGCCLPAVQQQIHTTAVHRTFWEREKKSGYKTKLPEPSKKQMIMDGLRDLKEEMKLWRQEVKEQFESDPILVFRPGETDVVFDFKAPDVLDKWTVTTDADHGEGKSTATLELSAAGAGLFHGQVNSDHTKDGIIKRTGYANIRTKRVRKSFKRETTYDWTQYNMLVMKVRGDGRSYLINLHTEGYFDLMWNDIYHYVLYTRGGPHWQIAKIPFSKFFLSSKGRVQDRQGAIPLNRVTHFGFSVAAKKGMDGPFGLEIDYVGLEYDPSHREEFAYEMYQTPKYIVAT</sequence>
<name>CIA30_DROME</name>
<keyword id="KW-0143">Chaperone</keyword>
<keyword id="KW-0496">Mitochondrion</keyword>
<keyword id="KW-1185">Reference proteome</keyword>
<keyword id="KW-0809">Transit peptide</keyword>